<dbReference type="EC" id="3.5.2.3" evidence="1"/>
<dbReference type="EMBL" id="AM406670">
    <property type="protein sequence ID" value="CAL93490.1"/>
    <property type="molecule type" value="Genomic_DNA"/>
</dbReference>
<dbReference type="RefSeq" id="WP_011764607.1">
    <property type="nucleotide sequence ID" value="NC_008702.1"/>
</dbReference>
<dbReference type="SMR" id="A1K3T5"/>
<dbReference type="STRING" id="62928.azo0873"/>
<dbReference type="MEROPS" id="M38.A02"/>
<dbReference type="KEGG" id="azo:azo0873"/>
<dbReference type="eggNOG" id="COG0418">
    <property type="taxonomic scope" value="Bacteria"/>
</dbReference>
<dbReference type="HOGENOM" id="CLU_041558_1_0_4"/>
<dbReference type="UniPathway" id="UPA00070">
    <property type="reaction ID" value="UER00117"/>
</dbReference>
<dbReference type="Proteomes" id="UP000002588">
    <property type="component" value="Chromosome"/>
</dbReference>
<dbReference type="GO" id="GO:0005829">
    <property type="term" value="C:cytosol"/>
    <property type="evidence" value="ECO:0007669"/>
    <property type="project" value="TreeGrafter"/>
</dbReference>
<dbReference type="GO" id="GO:0004151">
    <property type="term" value="F:dihydroorotase activity"/>
    <property type="evidence" value="ECO:0007669"/>
    <property type="project" value="UniProtKB-UniRule"/>
</dbReference>
<dbReference type="GO" id="GO:0008270">
    <property type="term" value="F:zinc ion binding"/>
    <property type="evidence" value="ECO:0007669"/>
    <property type="project" value="UniProtKB-UniRule"/>
</dbReference>
<dbReference type="GO" id="GO:0006207">
    <property type="term" value="P:'de novo' pyrimidine nucleobase biosynthetic process"/>
    <property type="evidence" value="ECO:0007669"/>
    <property type="project" value="TreeGrafter"/>
</dbReference>
<dbReference type="GO" id="GO:0044205">
    <property type="term" value="P:'de novo' UMP biosynthetic process"/>
    <property type="evidence" value="ECO:0007669"/>
    <property type="project" value="UniProtKB-UniRule"/>
</dbReference>
<dbReference type="CDD" id="cd01294">
    <property type="entry name" value="DHOase"/>
    <property type="match status" value="1"/>
</dbReference>
<dbReference type="FunFam" id="3.20.20.140:FF:000006">
    <property type="entry name" value="Dihydroorotase"/>
    <property type="match status" value="1"/>
</dbReference>
<dbReference type="Gene3D" id="3.20.20.140">
    <property type="entry name" value="Metal-dependent hydrolases"/>
    <property type="match status" value="1"/>
</dbReference>
<dbReference type="HAMAP" id="MF_00219">
    <property type="entry name" value="PyrC_classII"/>
    <property type="match status" value="1"/>
</dbReference>
<dbReference type="InterPro" id="IPR006680">
    <property type="entry name" value="Amidohydro-rel"/>
</dbReference>
<dbReference type="InterPro" id="IPR004721">
    <property type="entry name" value="DHOdimr"/>
</dbReference>
<dbReference type="InterPro" id="IPR002195">
    <property type="entry name" value="Dihydroorotase_CS"/>
</dbReference>
<dbReference type="InterPro" id="IPR032466">
    <property type="entry name" value="Metal_Hydrolase"/>
</dbReference>
<dbReference type="NCBIfam" id="TIGR00856">
    <property type="entry name" value="pyrC_dimer"/>
    <property type="match status" value="1"/>
</dbReference>
<dbReference type="PANTHER" id="PTHR43137">
    <property type="entry name" value="DIHYDROOROTASE"/>
    <property type="match status" value="1"/>
</dbReference>
<dbReference type="PANTHER" id="PTHR43137:SF1">
    <property type="entry name" value="DIHYDROOROTASE"/>
    <property type="match status" value="1"/>
</dbReference>
<dbReference type="Pfam" id="PF04909">
    <property type="entry name" value="Amidohydro_2"/>
    <property type="match status" value="1"/>
</dbReference>
<dbReference type="PIRSF" id="PIRSF001237">
    <property type="entry name" value="DHOdimr"/>
    <property type="match status" value="1"/>
</dbReference>
<dbReference type="SUPFAM" id="SSF51556">
    <property type="entry name" value="Metallo-dependent hydrolases"/>
    <property type="match status" value="1"/>
</dbReference>
<dbReference type="PROSITE" id="PS00482">
    <property type="entry name" value="DIHYDROOROTASE_1"/>
    <property type="match status" value="1"/>
</dbReference>
<dbReference type="PROSITE" id="PS00483">
    <property type="entry name" value="DIHYDROOROTASE_2"/>
    <property type="match status" value="1"/>
</dbReference>
<keyword id="KW-0378">Hydrolase</keyword>
<keyword id="KW-0479">Metal-binding</keyword>
<keyword id="KW-0665">Pyrimidine biosynthesis</keyword>
<keyword id="KW-1185">Reference proteome</keyword>
<keyword id="KW-0862">Zinc</keyword>
<comment type="function">
    <text evidence="1">Catalyzes the reversible cyclization of carbamoyl aspartate to dihydroorotate.</text>
</comment>
<comment type="catalytic activity">
    <reaction evidence="1">
        <text>(S)-dihydroorotate + H2O = N-carbamoyl-L-aspartate + H(+)</text>
        <dbReference type="Rhea" id="RHEA:24296"/>
        <dbReference type="ChEBI" id="CHEBI:15377"/>
        <dbReference type="ChEBI" id="CHEBI:15378"/>
        <dbReference type="ChEBI" id="CHEBI:30864"/>
        <dbReference type="ChEBI" id="CHEBI:32814"/>
        <dbReference type="EC" id="3.5.2.3"/>
    </reaction>
</comment>
<comment type="cofactor">
    <cofactor evidence="1">
        <name>Zn(2+)</name>
        <dbReference type="ChEBI" id="CHEBI:29105"/>
    </cofactor>
    <text evidence="1">Binds 2 Zn(2+) ions per subunit.</text>
</comment>
<comment type="pathway">
    <text evidence="1">Pyrimidine metabolism; UMP biosynthesis via de novo pathway; (S)-dihydroorotate from bicarbonate: step 3/3.</text>
</comment>
<comment type="subunit">
    <text evidence="1">Homodimer.</text>
</comment>
<comment type="similarity">
    <text evidence="1">Belongs to the metallo-dependent hydrolases superfamily. DHOase family. Class II DHOase subfamily.</text>
</comment>
<protein>
    <recommendedName>
        <fullName evidence="1">Dihydroorotase</fullName>
        <shortName evidence="1">DHOase</shortName>
        <ecNumber evidence="1">3.5.2.3</ecNumber>
    </recommendedName>
</protein>
<evidence type="ECO:0000255" key="1">
    <source>
        <dbReference type="HAMAP-Rule" id="MF_00219"/>
    </source>
</evidence>
<accession>A1K3T5</accession>
<feature type="chain" id="PRO_0000325569" description="Dihydroorotase">
    <location>
        <begin position="1"/>
        <end position="344"/>
    </location>
</feature>
<feature type="active site" evidence="1">
    <location>
        <position position="247"/>
    </location>
</feature>
<feature type="binding site" evidence="1">
    <location>
        <position position="13"/>
    </location>
    <ligand>
        <name>Zn(2+)</name>
        <dbReference type="ChEBI" id="CHEBI:29105"/>
        <label>1</label>
    </ligand>
</feature>
<feature type="binding site" evidence="1">
    <location>
        <begin position="15"/>
        <end position="17"/>
    </location>
    <ligand>
        <name>substrate</name>
    </ligand>
</feature>
<feature type="binding site" evidence="1">
    <location>
        <position position="15"/>
    </location>
    <ligand>
        <name>Zn(2+)</name>
        <dbReference type="ChEBI" id="CHEBI:29105"/>
        <label>1</label>
    </ligand>
</feature>
<feature type="binding site" evidence="1">
    <location>
        <position position="41"/>
    </location>
    <ligand>
        <name>substrate</name>
    </ligand>
</feature>
<feature type="binding site" description="via carbamate group" evidence="1">
    <location>
        <position position="99"/>
    </location>
    <ligand>
        <name>Zn(2+)</name>
        <dbReference type="ChEBI" id="CHEBI:29105"/>
        <label>1</label>
    </ligand>
</feature>
<feature type="binding site" description="via carbamate group" evidence="1">
    <location>
        <position position="99"/>
    </location>
    <ligand>
        <name>Zn(2+)</name>
        <dbReference type="ChEBI" id="CHEBI:29105"/>
        <label>2</label>
    </ligand>
</feature>
<feature type="binding site" evidence="1">
    <location>
        <position position="136"/>
    </location>
    <ligand>
        <name>substrate</name>
    </ligand>
</feature>
<feature type="binding site" evidence="1">
    <location>
        <position position="136"/>
    </location>
    <ligand>
        <name>Zn(2+)</name>
        <dbReference type="ChEBI" id="CHEBI:29105"/>
        <label>2</label>
    </ligand>
</feature>
<feature type="binding site" evidence="1">
    <location>
        <position position="174"/>
    </location>
    <ligand>
        <name>Zn(2+)</name>
        <dbReference type="ChEBI" id="CHEBI:29105"/>
        <label>2</label>
    </ligand>
</feature>
<feature type="binding site" evidence="1">
    <location>
        <position position="219"/>
    </location>
    <ligand>
        <name>substrate</name>
    </ligand>
</feature>
<feature type="binding site" evidence="1">
    <location>
        <position position="247"/>
    </location>
    <ligand>
        <name>Zn(2+)</name>
        <dbReference type="ChEBI" id="CHEBI:29105"/>
        <label>1</label>
    </ligand>
</feature>
<feature type="binding site" evidence="1">
    <location>
        <position position="251"/>
    </location>
    <ligand>
        <name>substrate</name>
    </ligand>
</feature>
<feature type="binding site" evidence="1">
    <location>
        <position position="263"/>
    </location>
    <ligand>
        <name>substrate</name>
    </ligand>
</feature>
<feature type="modified residue" description="N6-carboxylysine" evidence="1">
    <location>
        <position position="99"/>
    </location>
</feature>
<name>PYRC_AZOSB</name>
<sequence>MQSITFTRPDDWHLHVRDGAALAAVVPHTAERFGRALIMPNLRPPVTTTAQALAYRDRIRAAVPAGLAFEPLMSLYLTDNTAPDEIERARASGAVIAAKLYPAGATTNSDAGVTAIDKIYPVLERMEACGLVLCVHGEVTGGEVDVFDRERVFMEKILSPLVRRFPALKVVFEHITTAEAAQFVRAAGANVAATVTAHHLLLNRNAIFAGGIRPHHYCLPVLKRETHRVALVEAVTSGNPRFFLGTDSAPHARSTKEAACGCAGCYTAHAGIELYAEVFDAAGALERLEAFASLNGPAFYGLAPNADKITLVRESWSVPAGFPYLDDDPLVPLRAGESVGWRLA</sequence>
<proteinExistence type="inferred from homology"/>
<reference key="1">
    <citation type="journal article" date="2006" name="Nat. Biotechnol.">
        <title>Complete genome of the mutualistic, N2-fixing grass endophyte Azoarcus sp. strain BH72.</title>
        <authorList>
            <person name="Krause A."/>
            <person name="Ramakumar A."/>
            <person name="Bartels D."/>
            <person name="Battistoni F."/>
            <person name="Bekel T."/>
            <person name="Boch J."/>
            <person name="Boehm M."/>
            <person name="Friedrich F."/>
            <person name="Hurek T."/>
            <person name="Krause L."/>
            <person name="Linke B."/>
            <person name="McHardy A.C."/>
            <person name="Sarkar A."/>
            <person name="Schneiker S."/>
            <person name="Syed A.A."/>
            <person name="Thauer R."/>
            <person name="Vorhoelter F.-J."/>
            <person name="Weidner S."/>
            <person name="Puehler A."/>
            <person name="Reinhold-Hurek B."/>
            <person name="Kaiser O."/>
            <person name="Goesmann A."/>
        </authorList>
    </citation>
    <scope>NUCLEOTIDE SEQUENCE [LARGE SCALE GENOMIC DNA]</scope>
    <source>
        <strain>BH72</strain>
    </source>
</reference>
<organism>
    <name type="scientific">Azoarcus sp. (strain BH72)</name>
    <dbReference type="NCBI Taxonomy" id="418699"/>
    <lineage>
        <taxon>Bacteria</taxon>
        <taxon>Pseudomonadati</taxon>
        <taxon>Pseudomonadota</taxon>
        <taxon>Betaproteobacteria</taxon>
        <taxon>Rhodocyclales</taxon>
        <taxon>Zoogloeaceae</taxon>
        <taxon>Azoarcus</taxon>
    </lineage>
</organism>
<gene>
    <name evidence="1" type="primary">pyrC</name>
    <name type="ordered locus">azo0873</name>
</gene>